<sequence>MKTDIEIAQSIELKPIVDVVEKLGISYDDLELYGKYKAKLSFDKIRAVESNPVGKLILVTAINPTPAGEGKSTLTIGLADALNKIGKKTMIAIREPSLGPVMGIKGGAAGGGYAQVLPMEDINLHFTGDMHAITTANNALSALIDNHLHQGNELGIDQRRILWKRVVDLNDRALRHVTVGLGGPLNGIPREDGFDITVASEIMAILCLATDIEDLKRRLANIVIGYRYDRTPVSVGDLQVEGALALILKDAIKPNLVQTIYGTPAFVHGGPFANIAHGCNSVLATTTALHLADYTVTEAGFGADLGAEKFLDIKTPNLPTSPDAVVIVATLRALKMNGGVAKDALTEENVEAVRAGFANLKRHVENIRKFGIPAVVAINEFVSDTEAEIAVLKELCASIDVPVELASVWADGAEGGVALAETVVKTIAENPANYKRLYDNDLSVQEKIEKIVTEIYRGSKVNFEKKSQTQIAQIVQNGWDKLPICMAKTQYSFSDNPNALGAPENFEITIRELVPKLGAGFIVALTGDVMTMPGLPKRPAALNMDVESDGTVLGLF</sequence>
<protein>
    <recommendedName>
        <fullName evidence="1">Formate--tetrahydrofolate ligase</fullName>
        <ecNumber evidence="1">6.3.4.3</ecNumber>
    </recommendedName>
    <alternativeName>
        <fullName evidence="1">Formyltetrahydrofolate synthetase</fullName>
        <shortName evidence="1">FHS</shortName>
        <shortName evidence="1">FTHFS</shortName>
    </alternativeName>
</protein>
<dbReference type="EC" id="6.3.4.3" evidence="1"/>
<dbReference type="EMBL" id="AE007317">
    <property type="protein sequence ID" value="AAK99912.1"/>
    <property type="molecule type" value="Genomic_DNA"/>
</dbReference>
<dbReference type="PIR" id="D98010">
    <property type="entry name" value="D98010"/>
</dbReference>
<dbReference type="RefSeq" id="NP_358702.1">
    <property type="nucleotide sequence ID" value="NC_003098.1"/>
</dbReference>
<dbReference type="RefSeq" id="WP_000845292.1">
    <property type="nucleotide sequence ID" value="NC_003098.1"/>
</dbReference>
<dbReference type="SMR" id="Q8DPL5"/>
<dbReference type="STRING" id="171101.spr1109"/>
<dbReference type="KEGG" id="spr:spr1109"/>
<dbReference type="PATRIC" id="fig|171101.6.peg.1205"/>
<dbReference type="eggNOG" id="COG2759">
    <property type="taxonomic scope" value="Bacteria"/>
</dbReference>
<dbReference type="HOGENOM" id="CLU_003601_3_3_9"/>
<dbReference type="UniPathway" id="UPA00193"/>
<dbReference type="Proteomes" id="UP000000586">
    <property type="component" value="Chromosome"/>
</dbReference>
<dbReference type="GO" id="GO:0005524">
    <property type="term" value="F:ATP binding"/>
    <property type="evidence" value="ECO:0007669"/>
    <property type="project" value="UniProtKB-UniRule"/>
</dbReference>
<dbReference type="GO" id="GO:0004329">
    <property type="term" value="F:formate-tetrahydrofolate ligase activity"/>
    <property type="evidence" value="ECO:0007669"/>
    <property type="project" value="UniProtKB-UniRule"/>
</dbReference>
<dbReference type="GO" id="GO:0035999">
    <property type="term" value="P:tetrahydrofolate interconversion"/>
    <property type="evidence" value="ECO:0007669"/>
    <property type="project" value="UniProtKB-UniRule"/>
</dbReference>
<dbReference type="CDD" id="cd00477">
    <property type="entry name" value="FTHFS"/>
    <property type="match status" value="1"/>
</dbReference>
<dbReference type="FunFam" id="3.30.1510.10:FF:000001">
    <property type="entry name" value="Formate--tetrahydrofolate ligase"/>
    <property type="match status" value="1"/>
</dbReference>
<dbReference type="FunFam" id="3.10.410.10:FF:000001">
    <property type="entry name" value="Putative formate--tetrahydrofolate ligase"/>
    <property type="match status" value="1"/>
</dbReference>
<dbReference type="Gene3D" id="3.30.1510.10">
    <property type="entry name" value="Domain 2, N(10)-formyltetrahydrofolate synthetase"/>
    <property type="match status" value="1"/>
</dbReference>
<dbReference type="Gene3D" id="3.10.410.10">
    <property type="entry name" value="Formyltetrahydrofolate synthetase, domain 3"/>
    <property type="match status" value="1"/>
</dbReference>
<dbReference type="Gene3D" id="3.40.50.300">
    <property type="entry name" value="P-loop containing nucleotide triphosphate hydrolases"/>
    <property type="match status" value="1"/>
</dbReference>
<dbReference type="HAMAP" id="MF_01543">
    <property type="entry name" value="FTHFS"/>
    <property type="match status" value="1"/>
</dbReference>
<dbReference type="InterPro" id="IPR000559">
    <property type="entry name" value="Formate_THF_ligase"/>
</dbReference>
<dbReference type="InterPro" id="IPR020628">
    <property type="entry name" value="Formate_THF_ligase_CS"/>
</dbReference>
<dbReference type="InterPro" id="IPR027417">
    <property type="entry name" value="P-loop_NTPase"/>
</dbReference>
<dbReference type="NCBIfam" id="NF010030">
    <property type="entry name" value="PRK13505.1"/>
    <property type="match status" value="1"/>
</dbReference>
<dbReference type="Pfam" id="PF01268">
    <property type="entry name" value="FTHFS"/>
    <property type="match status" value="1"/>
</dbReference>
<dbReference type="SUPFAM" id="SSF52540">
    <property type="entry name" value="P-loop containing nucleoside triphosphate hydrolases"/>
    <property type="match status" value="1"/>
</dbReference>
<dbReference type="PROSITE" id="PS00721">
    <property type="entry name" value="FTHFS_1"/>
    <property type="match status" value="1"/>
</dbReference>
<dbReference type="PROSITE" id="PS00722">
    <property type="entry name" value="FTHFS_2"/>
    <property type="match status" value="1"/>
</dbReference>
<accession>Q8DPL5</accession>
<keyword id="KW-0067">ATP-binding</keyword>
<keyword id="KW-0436">Ligase</keyword>
<keyword id="KW-0547">Nucleotide-binding</keyword>
<keyword id="KW-0554">One-carbon metabolism</keyword>
<keyword id="KW-1185">Reference proteome</keyword>
<proteinExistence type="inferred from homology"/>
<organism>
    <name type="scientific">Streptococcus pneumoniae (strain ATCC BAA-255 / R6)</name>
    <dbReference type="NCBI Taxonomy" id="171101"/>
    <lineage>
        <taxon>Bacteria</taxon>
        <taxon>Bacillati</taxon>
        <taxon>Bacillota</taxon>
        <taxon>Bacilli</taxon>
        <taxon>Lactobacillales</taxon>
        <taxon>Streptococcaceae</taxon>
        <taxon>Streptococcus</taxon>
    </lineage>
</organism>
<gene>
    <name evidence="1" type="primary">fhs</name>
    <name type="ordered locus">spr1109</name>
</gene>
<comment type="catalytic activity">
    <reaction evidence="1">
        <text>(6S)-5,6,7,8-tetrahydrofolate + formate + ATP = (6R)-10-formyltetrahydrofolate + ADP + phosphate</text>
        <dbReference type="Rhea" id="RHEA:20221"/>
        <dbReference type="ChEBI" id="CHEBI:15740"/>
        <dbReference type="ChEBI" id="CHEBI:30616"/>
        <dbReference type="ChEBI" id="CHEBI:43474"/>
        <dbReference type="ChEBI" id="CHEBI:57453"/>
        <dbReference type="ChEBI" id="CHEBI:195366"/>
        <dbReference type="ChEBI" id="CHEBI:456216"/>
        <dbReference type="EC" id="6.3.4.3"/>
    </reaction>
</comment>
<comment type="pathway">
    <text evidence="1">One-carbon metabolism; tetrahydrofolate interconversion.</text>
</comment>
<comment type="similarity">
    <text evidence="1">Belongs to the formate--tetrahydrofolate ligase family.</text>
</comment>
<reference key="1">
    <citation type="journal article" date="2001" name="J. Bacteriol.">
        <title>Genome of the bacterium Streptococcus pneumoniae strain R6.</title>
        <authorList>
            <person name="Hoskins J."/>
            <person name="Alborn W.E. Jr."/>
            <person name="Arnold J."/>
            <person name="Blaszczak L.C."/>
            <person name="Burgett S."/>
            <person name="DeHoff B.S."/>
            <person name="Estrem S.T."/>
            <person name="Fritz L."/>
            <person name="Fu D.-J."/>
            <person name="Fuller W."/>
            <person name="Geringer C."/>
            <person name="Gilmour R."/>
            <person name="Glass J.S."/>
            <person name="Khoja H."/>
            <person name="Kraft A.R."/>
            <person name="Lagace R.E."/>
            <person name="LeBlanc D.J."/>
            <person name="Lee L.N."/>
            <person name="Lefkowitz E.J."/>
            <person name="Lu J."/>
            <person name="Matsushima P."/>
            <person name="McAhren S.M."/>
            <person name="McHenney M."/>
            <person name="McLeaster K."/>
            <person name="Mundy C.W."/>
            <person name="Nicas T.I."/>
            <person name="Norris F.H."/>
            <person name="O'Gara M."/>
            <person name="Peery R.B."/>
            <person name="Robertson G.T."/>
            <person name="Rockey P."/>
            <person name="Sun P.-M."/>
            <person name="Winkler M.E."/>
            <person name="Yang Y."/>
            <person name="Young-Bellido M."/>
            <person name="Zhao G."/>
            <person name="Zook C.A."/>
            <person name="Baltz R.H."/>
            <person name="Jaskunas S.R."/>
            <person name="Rosteck P.R. Jr."/>
            <person name="Skatrud P.L."/>
            <person name="Glass J.I."/>
        </authorList>
    </citation>
    <scope>NUCLEOTIDE SEQUENCE [LARGE SCALE GENOMIC DNA]</scope>
    <source>
        <strain>ATCC BAA-255 / R6</strain>
    </source>
</reference>
<feature type="chain" id="PRO_0000199388" description="Formate--tetrahydrofolate ligase">
    <location>
        <begin position="1"/>
        <end position="556"/>
    </location>
</feature>
<feature type="binding site" evidence="1">
    <location>
        <begin position="65"/>
        <end position="72"/>
    </location>
    <ligand>
        <name>ATP</name>
        <dbReference type="ChEBI" id="CHEBI:30616"/>
    </ligand>
</feature>
<evidence type="ECO:0000255" key="1">
    <source>
        <dbReference type="HAMAP-Rule" id="MF_01543"/>
    </source>
</evidence>
<name>FTHS_STRR6</name>